<dbReference type="EMBL" id="L09648">
    <property type="protein sequence ID" value="AAA41339.1"/>
    <property type="molecule type" value="mRNA"/>
</dbReference>
<dbReference type="PIR" id="S35090">
    <property type="entry name" value="S35090"/>
</dbReference>
<dbReference type="RefSeq" id="NP_058773.1">
    <property type="nucleotide sequence ID" value="NM_017077.2"/>
</dbReference>
<dbReference type="SMR" id="P32183"/>
<dbReference type="STRING" id="10116.ENSRNOP00000019219"/>
<dbReference type="GlyGen" id="P32183">
    <property type="glycosylation" value="2 sites"/>
</dbReference>
<dbReference type="PhosphoSitePlus" id="P32183"/>
<dbReference type="PaxDb" id="10116-ENSRNOP00000019219"/>
<dbReference type="GeneID" id="25100"/>
<dbReference type="KEGG" id="rno:25100"/>
<dbReference type="AGR" id="RGD:2809"/>
<dbReference type="CTD" id="3171"/>
<dbReference type="RGD" id="2809">
    <property type="gene designation" value="Foxa3"/>
</dbReference>
<dbReference type="eggNOG" id="KOG3563">
    <property type="taxonomic scope" value="Eukaryota"/>
</dbReference>
<dbReference type="InParanoid" id="P32183"/>
<dbReference type="PhylomeDB" id="P32183"/>
<dbReference type="PRO" id="PR:P32183"/>
<dbReference type="Proteomes" id="UP000002494">
    <property type="component" value="Unplaced"/>
</dbReference>
<dbReference type="GO" id="GO:0005634">
    <property type="term" value="C:nucleus"/>
    <property type="evidence" value="ECO:0000266"/>
    <property type="project" value="RGD"/>
</dbReference>
<dbReference type="GO" id="GO:0003677">
    <property type="term" value="F:DNA binding"/>
    <property type="evidence" value="ECO:0000314"/>
    <property type="project" value="RGD"/>
</dbReference>
<dbReference type="GO" id="GO:0003700">
    <property type="term" value="F:DNA-binding transcription factor activity"/>
    <property type="evidence" value="ECO:0000314"/>
    <property type="project" value="RGD"/>
</dbReference>
<dbReference type="GO" id="GO:0000981">
    <property type="term" value="F:DNA-binding transcription factor activity, RNA polymerase II-specific"/>
    <property type="evidence" value="ECO:0000318"/>
    <property type="project" value="GO_Central"/>
</dbReference>
<dbReference type="GO" id="GO:0019904">
    <property type="term" value="F:protein domain specific binding"/>
    <property type="evidence" value="ECO:0007669"/>
    <property type="project" value="InterPro"/>
</dbReference>
<dbReference type="GO" id="GO:0000978">
    <property type="term" value="F:RNA polymerase II cis-regulatory region sequence-specific DNA binding"/>
    <property type="evidence" value="ECO:0000318"/>
    <property type="project" value="GO_Central"/>
</dbReference>
<dbReference type="GO" id="GO:0043565">
    <property type="term" value="F:sequence-specific DNA binding"/>
    <property type="evidence" value="ECO:0000266"/>
    <property type="project" value="RGD"/>
</dbReference>
<dbReference type="GO" id="GO:1990837">
    <property type="term" value="F:sequence-specific double-stranded DNA binding"/>
    <property type="evidence" value="ECO:0000266"/>
    <property type="project" value="RGD"/>
</dbReference>
<dbReference type="GO" id="GO:0000976">
    <property type="term" value="F:transcription cis-regulatory region binding"/>
    <property type="evidence" value="ECO:0000266"/>
    <property type="project" value="RGD"/>
</dbReference>
<dbReference type="GO" id="GO:0009653">
    <property type="term" value="P:anatomical structure morphogenesis"/>
    <property type="evidence" value="ECO:0000318"/>
    <property type="project" value="GO_Central"/>
</dbReference>
<dbReference type="GO" id="GO:0030154">
    <property type="term" value="P:cell differentiation"/>
    <property type="evidence" value="ECO:0000318"/>
    <property type="project" value="GO_Central"/>
</dbReference>
<dbReference type="GO" id="GO:0009267">
    <property type="term" value="P:cellular response to starvation"/>
    <property type="evidence" value="ECO:0000266"/>
    <property type="project" value="RGD"/>
</dbReference>
<dbReference type="GO" id="GO:0006325">
    <property type="term" value="P:chromatin organization"/>
    <property type="evidence" value="ECO:0007669"/>
    <property type="project" value="UniProtKB-KW"/>
</dbReference>
<dbReference type="GO" id="GO:0061484">
    <property type="term" value="P:hematopoietic stem cell homeostasis"/>
    <property type="evidence" value="ECO:0000266"/>
    <property type="project" value="RGD"/>
</dbReference>
<dbReference type="GO" id="GO:0001678">
    <property type="term" value="P:intracellular glucose homeostasis"/>
    <property type="evidence" value="ECO:0000266"/>
    <property type="project" value="RGD"/>
</dbReference>
<dbReference type="GO" id="GO:0008285">
    <property type="term" value="P:negative regulation of cell population proliferation"/>
    <property type="evidence" value="ECO:0000315"/>
    <property type="project" value="RGD"/>
</dbReference>
<dbReference type="GO" id="GO:0070368">
    <property type="term" value="P:positive regulation of hepatocyte differentiation"/>
    <property type="evidence" value="ECO:0000315"/>
    <property type="project" value="RGD"/>
</dbReference>
<dbReference type="GO" id="GO:0045944">
    <property type="term" value="P:positive regulation of transcription by RNA polymerase II"/>
    <property type="evidence" value="ECO:0000314"/>
    <property type="project" value="UniProtKB"/>
</dbReference>
<dbReference type="GO" id="GO:0006355">
    <property type="term" value="P:regulation of DNA-templated transcription"/>
    <property type="evidence" value="ECO:0000314"/>
    <property type="project" value="RGD"/>
</dbReference>
<dbReference type="GO" id="GO:0006357">
    <property type="term" value="P:regulation of transcription by RNA polymerase II"/>
    <property type="evidence" value="ECO:0000266"/>
    <property type="project" value="RGD"/>
</dbReference>
<dbReference type="GO" id="GO:0031667">
    <property type="term" value="P:response to nutrient levels"/>
    <property type="evidence" value="ECO:0000270"/>
    <property type="project" value="RGD"/>
</dbReference>
<dbReference type="GO" id="GO:0007283">
    <property type="term" value="P:spermatogenesis"/>
    <property type="evidence" value="ECO:0000266"/>
    <property type="project" value="RGD"/>
</dbReference>
<dbReference type="GO" id="GO:0006366">
    <property type="term" value="P:transcription by RNA polymerase II"/>
    <property type="evidence" value="ECO:0000266"/>
    <property type="project" value="RGD"/>
</dbReference>
<dbReference type="CDD" id="cd20040">
    <property type="entry name" value="FH_FOXA3"/>
    <property type="match status" value="1"/>
</dbReference>
<dbReference type="FunFam" id="1.10.10.10:FF:000042">
    <property type="entry name" value="hepatocyte nuclear factor 3-beta"/>
    <property type="match status" value="1"/>
</dbReference>
<dbReference type="Gene3D" id="1.10.10.10">
    <property type="entry name" value="Winged helix-like DNA-binding domain superfamily/Winged helix DNA-binding domain"/>
    <property type="match status" value="1"/>
</dbReference>
<dbReference type="InterPro" id="IPR047366">
    <property type="entry name" value="FH_FOXA3"/>
</dbReference>
<dbReference type="InterPro" id="IPR013638">
    <property type="entry name" value="Fork-head_N"/>
</dbReference>
<dbReference type="InterPro" id="IPR001766">
    <property type="entry name" value="Fork_head_dom"/>
</dbReference>
<dbReference type="InterPro" id="IPR050211">
    <property type="entry name" value="FOX_domain-containing"/>
</dbReference>
<dbReference type="InterPro" id="IPR018122">
    <property type="entry name" value="TF_fork_head_CS_1"/>
</dbReference>
<dbReference type="InterPro" id="IPR030456">
    <property type="entry name" value="TF_fork_head_CS_2"/>
</dbReference>
<dbReference type="InterPro" id="IPR036388">
    <property type="entry name" value="WH-like_DNA-bd_sf"/>
</dbReference>
<dbReference type="InterPro" id="IPR036390">
    <property type="entry name" value="WH_DNA-bd_sf"/>
</dbReference>
<dbReference type="PANTHER" id="PTHR11829">
    <property type="entry name" value="FORKHEAD BOX PROTEIN"/>
    <property type="match status" value="1"/>
</dbReference>
<dbReference type="PANTHER" id="PTHR11829:SF201">
    <property type="entry name" value="HEPATOCYTE NUCLEAR FACTOR 3-GAMMA"/>
    <property type="match status" value="1"/>
</dbReference>
<dbReference type="Pfam" id="PF00250">
    <property type="entry name" value="Forkhead"/>
    <property type="match status" value="1"/>
</dbReference>
<dbReference type="Pfam" id="PF08430">
    <property type="entry name" value="Forkhead_N"/>
    <property type="match status" value="1"/>
</dbReference>
<dbReference type="PRINTS" id="PR00053">
    <property type="entry name" value="FORKHEAD"/>
</dbReference>
<dbReference type="SMART" id="SM00339">
    <property type="entry name" value="FH"/>
    <property type="match status" value="1"/>
</dbReference>
<dbReference type="SUPFAM" id="SSF46785">
    <property type="entry name" value="Winged helix' DNA-binding domain"/>
    <property type="match status" value="1"/>
</dbReference>
<dbReference type="PROSITE" id="PS00657">
    <property type="entry name" value="FORK_HEAD_1"/>
    <property type="match status" value="1"/>
</dbReference>
<dbReference type="PROSITE" id="PS00658">
    <property type="entry name" value="FORK_HEAD_2"/>
    <property type="match status" value="1"/>
</dbReference>
<dbReference type="PROSITE" id="PS50039">
    <property type="entry name" value="FORK_HEAD_3"/>
    <property type="match status" value="1"/>
</dbReference>
<evidence type="ECO:0000250" key="1"/>
<evidence type="ECO:0000255" key="2">
    <source>
        <dbReference type="PROSITE-ProRule" id="PRU00089"/>
    </source>
</evidence>
<evidence type="ECO:0000256" key="3">
    <source>
        <dbReference type="SAM" id="MobiDB-lite"/>
    </source>
</evidence>
<evidence type="ECO:0000269" key="4">
    <source>
    </source>
</evidence>
<organism>
    <name type="scientific">Rattus norvegicus</name>
    <name type="common">Rat</name>
    <dbReference type="NCBI Taxonomy" id="10116"/>
    <lineage>
        <taxon>Eukaryota</taxon>
        <taxon>Metazoa</taxon>
        <taxon>Chordata</taxon>
        <taxon>Craniata</taxon>
        <taxon>Vertebrata</taxon>
        <taxon>Euteleostomi</taxon>
        <taxon>Mammalia</taxon>
        <taxon>Eutheria</taxon>
        <taxon>Euarchontoglires</taxon>
        <taxon>Glires</taxon>
        <taxon>Rodentia</taxon>
        <taxon>Myomorpha</taxon>
        <taxon>Muroidea</taxon>
        <taxon>Muridae</taxon>
        <taxon>Murinae</taxon>
        <taxon>Rattus</taxon>
    </lineage>
</organism>
<name>FOXA3_RAT</name>
<sequence>MLGSVKMEAHDLAEWSYYPEAGEVYSPVNPVPTMAPLNSYMSLNPLSSPYPPGGLQASPLPTGPLAPPAPTAPLGPTFPGLGAGSGTGGSASGYGAPGPGLVHGKEMAKGYRRPLTHAKPPYSYISLITMAIQQAPGKMLTLSEIYQWIMDLFPYYRENQQRWQNSIRHSLSFNDCFVKVARSPDKPGKGSYWALHPSSGNMFENGCYLRRQKRFKLEEKAKKGNSATSATRNGTVGSATSATTTAATAVTSPAQPQPTPPSEPEAQSGEDVGGLDCASPPSSAPYFTGLELPGELKLDAPYNFNHPFSINNLMSEQTSTPSKLDVGFGGYGAESGEPGVYYQSLYSRSLLNAS</sequence>
<feature type="chain" id="PRO_0000091802" description="Hepatocyte nuclear factor 3-gamma">
    <location>
        <begin position="1"/>
        <end position="354"/>
    </location>
</feature>
<feature type="DNA-binding region" description="Fork-head" evidence="2">
    <location>
        <begin position="118"/>
        <end position="209"/>
    </location>
</feature>
<feature type="region of interest" description="Disordered" evidence="3">
    <location>
        <begin position="52"/>
        <end position="92"/>
    </location>
</feature>
<feature type="region of interest" description="Disordered" evidence="3">
    <location>
        <begin position="219"/>
        <end position="280"/>
    </location>
</feature>
<feature type="compositionally biased region" description="Pro residues" evidence="3">
    <location>
        <begin position="61"/>
        <end position="73"/>
    </location>
</feature>
<feature type="compositionally biased region" description="Gly residues" evidence="3">
    <location>
        <begin position="81"/>
        <end position="92"/>
    </location>
</feature>
<feature type="compositionally biased region" description="Polar residues" evidence="3">
    <location>
        <begin position="225"/>
        <end position="237"/>
    </location>
</feature>
<feature type="compositionally biased region" description="Low complexity" evidence="3">
    <location>
        <begin position="238"/>
        <end position="254"/>
    </location>
</feature>
<reference key="1">
    <citation type="journal article" date="1991" name="Genes Dev.">
        <title>Hepatocyte nuclear factor 3 alpha belongs to a gene family in mammals that is homologous to the Drosophila homeotic gene fork head.</title>
        <authorList>
            <person name="Lai E."/>
            <person name="Prezioso V.R."/>
            <person name="Tao W.F."/>
            <person name="Chen W.S."/>
            <person name="Darnell J.E. Jr."/>
        </authorList>
    </citation>
    <scope>NUCLEOTIDE SEQUENCE [MRNA]</scope>
</reference>
<reference key="2">
    <citation type="journal article" date="1997" name="Biochemistry">
        <title>The role of HNF1alpha, HNF3gamma, and cyclic AMP in glucose-6-phosphatase gene activation.</title>
        <authorList>
            <person name="Lin B."/>
            <person name="Morris D.W."/>
            <person name="Chou J.Y."/>
        </authorList>
    </citation>
    <scope>FUNCTION</scope>
</reference>
<reference key="3">
    <citation type="journal article" date="1993" name="Nature">
        <title>Co-crystal structure of the HNF-3/fork head DNA-recognition motif resembles histone H5.</title>
        <authorList>
            <person name="Clark K.L."/>
            <person name="Halay E.D."/>
            <person name="Lai E."/>
            <person name="Burley S.K."/>
        </authorList>
    </citation>
    <scope>STRUCTURE BY NMR OF 107-223</scope>
</reference>
<gene>
    <name type="primary">Foxa3</name>
    <name type="synonym">Hnf3g</name>
    <name type="synonym">Tcf-3g</name>
    <name type="synonym">Tcf3g</name>
</gene>
<comment type="function">
    <text evidence="1 4">Transcription factor that is thought to act as a 'pioneer' factor opening the compacted chromatin for other proteins through interactions with nucleosomal core histones and thereby replacing linker histones at target enhancer and/or promoter sites (By similarity). Originally described as a transcription activator for a number of liver genes such as AFP, albumin, tyrosine aminotransferase, PEPCK, etc. Interacts with the cis-acting regulatory regions of these genes. Involved in glucose homeostasis. Involved in regulation of neuronal-specific transcription. May be involved in regulation of spermatogenesis (By similarity).</text>
</comment>
<comment type="subunit">
    <text evidence="1">Interacts with FOXA2.</text>
</comment>
<comment type="subcellular location">
    <subcellularLocation>
        <location>Nucleus</location>
    </subcellularLocation>
</comment>
<comment type="tissue specificity">
    <text>Liver.</text>
</comment>
<accession>P32183</accession>
<keyword id="KW-0010">Activator</keyword>
<keyword id="KW-0156">Chromatin regulator</keyword>
<keyword id="KW-0217">Developmental protein</keyword>
<keyword id="KW-0221">Differentiation</keyword>
<keyword id="KW-0238">DNA-binding</keyword>
<keyword id="KW-0539">Nucleus</keyword>
<keyword id="KW-1185">Reference proteome</keyword>
<keyword id="KW-0804">Transcription</keyword>
<keyword id="KW-0805">Transcription regulation</keyword>
<proteinExistence type="evidence at protein level"/>
<protein>
    <recommendedName>
        <fullName>Hepatocyte nuclear factor 3-gamma</fullName>
        <shortName>HNF-3-gamma</shortName>
        <shortName>HNF-3G</shortName>
    </recommendedName>
    <alternativeName>
        <fullName>Forkhead box protein A3</fullName>
    </alternativeName>
</protein>